<name>DNLJ_RHORT</name>
<accession>Q2RVV5</accession>
<protein>
    <recommendedName>
        <fullName evidence="1">DNA ligase</fullName>
        <ecNumber evidence="1">6.5.1.2</ecNumber>
    </recommendedName>
    <alternativeName>
        <fullName evidence="1">Polydeoxyribonucleotide synthase [NAD(+)]</fullName>
    </alternativeName>
</protein>
<evidence type="ECO:0000255" key="1">
    <source>
        <dbReference type="HAMAP-Rule" id="MF_01588"/>
    </source>
</evidence>
<feature type="chain" id="PRO_0000313405" description="DNA ligase">
    <location>
        <begin position="1"/>
        <end position="698"/>
    </location>
</feature>
<feature type="domain" description="BRCT" evidence="1">
    <location>
        <begin position="620"/>
        <end position="698"/>
    </location>
</feature>
<feature type="active site" description="N6-AMP-lysine intermediate" evidence="1">
    <location>
        <position position="125"/>
    </location>
</feature>
<feature type="binding site" evidence="1">
    <location>
        <begin position="40"/>
        <end position="44"/>
    </location>
    <ligand>
        <name>NAD(+)</name>
        <dbReference type="ChEBI" id="CHEBI:57540"/>
    </ligand>
</feature>
<feature type="binding site" evidence="1">
    <location>
        <begin position="89"/>
        <end position="90"/>
    </location>
    <ligand>
        <name>NAD(+)</name>
        <dbReference type="ChEBI" id="CHEBI:57540"/>
    </ligand>
</feature>
<feature type="binding site" evidence="1">
    <location>
        <position position="123"/>
    </location>
    <ligand>
        <name>NAD(+)</name>
        <dbReference type="ChEBI" id="CHEBI:57540"/>
    </ligand>
</feature>
<feature type="binding site" evidence="1">
    <location>
        <position position="146"/>
    </location>
    <ligand>
        <name>NAD(+)</name>
        <dbReference type="ChEBI" id="CHEBI:57540"/>
    </ligand>
</feature>
<feature type="binding site" evidence="1">
    <location>
        <position position="184"/>
    </location>
    <ligand>
        <name>NAD(+)</name>
        <dbReference type="ChEBI" id="CHEBI:57540"/>
    </ligand>
</feature>
<feature type="binding site" evidence="1">
    <location>
        <position position="300"/>
    </location>
    <ligand>
        <name>NAD(+)</name>
        <dbReference type="ChEBI" id="CHEBI:57540"/>
    </ligand>
</feature>
<feature type="binding site" evidence="1">
    <location>
        <position position="324"/>
    </location>
    <ligand>
        <name>NAD(+)</name>
        <dbReference type="ChEBI" id="CHEBI:57540"/>
    </ligand>
</feature>
<feature type="binding site" evidence="1">
    <location>
        <position position="418"/>
    </location>
    <ligand>
        <name>Zn(2+)</name>
        <dbReference type="ChEBI" id="CHEBI:29105"/>
    </ligand>
</feature>
<feature type="binding site" evidence="1">
    <location>
        <position position="421"/>
    </location>
    <ligand>
        <name>Zn(2+)</name>
        <dbReference type="ChEBI" id="CHEBI:29105"/>
    </ligand>
</feature>
<feature type="binding site" evidence="1">
    <location>
        <position position="436"/>
    </location>
    <ligand>
        <name>Zn(2+)</name>
        <dbReference type="ChEBI" id="CHEBI:29105"/>
    </ligand>
</feature>
<feature type="binding site" evidence="1">
    <location>
        <position position="442"/>
    </location>
    <ligand>
        <name>Zn(2+)</name>
        <dbReference type="ChEBI" id="CHEBI:29105"/>
    </ligand>
</feature>
<comment type="function">
    <text evidence="1">DNA ligase that catalyzes the formation of phosphodiester linkages between 5'-phosphoryl and 3'-hydroxyl groups in double-stranded DNA using NAD as a coenzyme and as the energy source for the reaction. It is essential for DNA replication and repair of damaged DNA.</text>
</comment>
<comment type="catalytic activity">
    <reaction evidence="1">
        <text>NAD(+) + (deoxyribonucleotide)n-3'-hydroxyl + 5'-phospho-(deoxyribonucleotide)m = (deoxyribonucleotide)n+m + AMP + beta-nicotinamide D-nucleotide.</text>
        <dbReference type="EC" id="6.5.1.2"/>
    </reaction>
</comment>
<comment type="cofactor">
    <cofactor evidence="1">
        <name>Mg(2+)</name>
        <dbReference type="ChEBI" id="CHEBI:18420"/>
    </cofactor>
    <cofactor evidence="1">
        <name>Mn(2+)</name>
        <dbReference type="ChEBI" id="CHEBI:29035"/>
    </cofactor>
</comment>
<comment type="similarity">
    <text evidence="1">Belongs to the NAD-dependent DNA ligase family. LigA subfamily.</text>
</comment>
<sequence>MIPVADLTEAEAARELERLAAEIARHDRLYHQQDAPEITDGEYDALVRRNNEIEAAFPELVRGDSPSAHVGAAPAEGFAKVTHALPMLSLGNVFSDDEAREFDQRIRRFLSLDGETTISYVAEPKIDGLSFSARYENGVYRRAATRGDGTTGEDITANLATLTDLPQRLTGDGPVPEVLEVRGEVFMTKADFRALNQRQIDAGAKPFANPRNAAAGSLRQLDPEITRSRSLSLFAYASGEVKGLEVESHHAFLERLKTWGFPVNPQTRPCQGVEDLIEATHALALQRAALDYDIDGVVYKVDRVDWQKRLGFVSRAPRWAIARKFPAERAQTTVKAIQIQVGRTGTLTPVAILEPVTVGGVVVGRATLHNEDEIARKDVRIGDMVTIQRAGDVIPQVVEVLLDQRPADSAPFVFPETCPVCGSHAVRQEGEVARRCAGGLICSAQAVERLKHFVSRDAFDIEGLGGKHIETFHNEGLITQPADIFALEAKDNEPGALQHLRSREGWGPKSAENLFKAITARKTIPLDRFIYALGIRQVGQATARLLAGHYASFAAWRKAMDEAQTEGSEAFADLQNIESIGPSVARDLVAFFGEEHNRAALDALIDAGVEVLDFARPQAAGDSPLAGKTVVFTGTLDTMSRGEAKARALALGAKVTGSVSAKTDYVVVGADAGSKEKKARELGLTVLSEAEFRAMSGG</sequence>
<dbReference type="EC" id="6.5.1.2" evidence="1"/>
<dbReference type="EMBL" id="CP000230">
    <property type="protein sequence ID" value="ABC21740.1"/>
    <property type="molecule type" value="Genomic_DNA"/>
</dbReference>
<dbReference type="RefSeq" id="WP_011388694.1">
    <property type="nucleotide sequence ID" value="NC_007643.1"/>
</dbReference>
<dbReference type="RefSeq" id="YP_426027.1">
    <property type="nucleotide sequence ID" value="NC_007643.1"/>
</dbReference>
<dbReference type="SMR" id="Q2RVV5"/>
<dbReference type="STRING" id="269796.Rru_A0939"/>
<dbReference type="EnsemblBacteria" id="ABC21740">
    <property type="protein sequence ID" value="ABC21740"/>
    <property type="gene ID" value="Rru_A0939"/>
</dbReference>
<dbReference type="KEGG" id="rru:Rru_A0939"/>
<dbReference type="PATRIC" id="fig|269796.9.peg.995"/>
<dbReference type="eggNOG" id="COG0272">
    <property type="taxonomic scope" value="Bacteria"/>
</dbReference>
<dbReference type="HOGENOM" id="CLU_007764_2_1_5"/>
<dbReference type="PhylomeDB" id="Q2RVV5"/>
<dbReference type="Proteomes" id="UP000001929">
    <property type="component" value="Chromosome"/>
</dbReference>
<dbReference type="GO" id="GO:0005829">
    <property type="term" value="C:cytosol"/>
    <property type="evidence" value="ECO:0007669"/>
    <property type="project" value="TreeGrafter"/>
</dbReference>
<dbReference type="GO" id="GO:0003911">
    <property type="term" value="F:DNA ligase (NAD+) activity"/>
    <property type="evidence" value="ECO:0007669"/>
    <property type="project" value="UniProtKB-UniRule"/>
</dbReference>
<dbReference type="GO" id="GO:0046872">
    <property type="term" value="F:metal ion binding"/>
    <property type="evidence" value="ECO:0007669"/>
    <property type="project" value="UniProtKB-KW"/>
</dbReference>
<dbReference type="GO" id="GO:0006281">
    <property type="term" value="P:DNA repair"/>
    <property type="evidence" value="ECO:0007669"/>
    <property type="project" value="UniProtKB-KW"/>
</dbReference>
<dbReference type="GO" id="GO:0006260">
    <property type="term" value="P:DNA replication"/>
    <property type="evidence" value="ECO:0007669"/>
    <property type="project" value="UniProtKB-KW"/>
</dbReference>
<dbReference type="CDD" id="cd17748">
    <property type="entry name" value="BRCT_DNA_ligase_like"/>
    <property type="match status" value="1"/>
</dbReference>
<dbReference type="CDD" id="cd00114">
    <property type="entry name" value="LIGANc"/>
    <property type="match status" value="1"/>
</dbReference>
<dbReference type="FunFam" id="2.40.50.140:FF:000012">
    <property type="entry name" value="DNA ligase"/>
    <property type="match status" value="1"/>
</dbReference>
<dbReference type="FunFam" id="3.30.470.30:FF:000001">
    <property type="entry name" value="DNA ligase"/>
    <property type="match status" value="1"/>
</dbReference>
<dbReference type="Gene3D" id="6.20.10.30">
    <property type="match status" value="1"/>
</dbReference>
<dbReference type="Gene3D" id="1.10.150.20">
    <property type="entry name" value="5' to 3' exonuclease, C-terminal subdomain"/>
    <property type="match status" value="2"/>
</dbReference>
<dbReference type="Gene3D" id="3.40.50.10190">
    <property type="entry name" value="BRCT domain"/>
    <property type="match status" value="1"/>
</dbReference>
<dbReference type="Gene3D" id="3.30.470.30">
    <property type="entry name" value="DNA ligase/mRNA capping enzyme"/>
    <property type="match status" value="1"/>
</dbReference>
<dbReference type="Gene3D" id="1.10.287.610">
    <property type="entry name" value="Helix hairpin bin"/>
    <property type="match status" value="1"/>
</dbReference>
<dbReference type="Gene3D" id="2.40.50.140">
    <property type="entry name" value="Nucleic acid-binding proteins"/>
    <property type="match status" value="1"/>
</dbReference>
<dbReference type="HAMAP" id="MF_01588">
    <property type="entry name" value="DNA_ligase_A"/>
    <property type="match status" value="1"/>
</dbReference>
<dbReference type="InterPro" id="IPR001357">
    <property type="entry name" value="BRCT_dom"/>
</dbReference>
<dbReference type="InterPro" id="IPR036420">
    <property type="entry name" value="BRCT_dom_sf"/>
</dbReference>
<dbReference type="InterPro" id="IPR041663">
    <property type="entry name" value="DisA/LigA_HHH"/>
</dbReference>
<dbReference type="InterPro" id="IPR001679">
    <property type="entry name" value="DNA_ligase"/>
</dbReference>
<dbReference type="InterPro" id="IPR033136">
    <property type="entry name" value="DNA_ligase_CS"/>
</dbReference>
<dbReference type="InterPro" id="IPR013839">
    <property type="entry name" value="DNAligase_adenylation"/>
</dbReference>
<dbReference type="InterPro" id="IPR013840">
    <property type="entry name" value="DNAligase_N"/>
</dbReference>
<dbReference type="InterPro" id="IPR012340">
    <property type="entry name" value="NA-bd_OB-fold"/>
</dbReference>
<dbReference type="InterPro" id="IPR004150">
    <property type="entry name" value="NAD_DNA_ligase_OB"/>
</dbReference>
<dbReference type="InterPro" id="IPR010994">
    <property type="entry name" value="RuvA_2-like"/>
</dbReference>
<dbReference type="InterPro" id="IPR004149">
    <property type="entry name" value="Znf_DNAligase_C4"/>
</dbReference>
<dbReference type="NCBIfam" id="TIGR00575">
    <property type="entry name" value="dnlj"/>
    <property type="match status" value="1"/>
</dbReference>
<dbReference type="NCBIfam" id="NF005932">
    <property type="entry name" value="PRK07956.1"/>
    <property type="match status" value="1"/>
</dbReference>
<dbReference type="PANTHER" id="PTHR23389">
    <property type="entry name" value="CHROMOSOME TRANSMISSION FIDELITY FACTOR 18"/>
    <property type="match status" value="1"/>
</dbReference>
<dbReference type="PANTHER" id="PTHR23389:SF9">
    <property type="entry name" value="DNA LIGASE"/>
    <property type="match status" value="1"/>
</dbReference>
<dbReference type="Pfam" id="PF00533">
    <property type="entry name" value="BRCT"/>
    <property type="match status" value="1"/>
</dbReference>
<dbReference type="Pfam" id="PF01653">
    <property type="entry name" value="DNA_ligase_aden"/>
    <property type="match status" value="1"/>
</dbReference>
<dbReference type="Pfam" id="PF03120">
    <property type="entry name" value="DNA_ligase_OB"/>
    <property type="match status" value="1"/>
</dbReference>
<dbReference type="Pfam" id="PF03119">
    <property type="entry name" value="DNA_ligase_ZBD"/>
    <property type="match status" value="1"/>
</dbReference>
<dbReference type="Pfam" id="PF12826">
    <property type="entry name" value="HHH_2"/>
    <property type="match status" value="1"/>
</dbReference>
<dbReference type="PIRSF" id="PIRSF001604">
    <property type="entry name" value="LigA"/>
    <property type="match status" value="1"/>
</dbReference>
<dbReference type="SMART" id="SM00292">
    <property type="entry name" value="BRCT"/>
    <property type="match status" value="1"/>
</dbReference>
<dbReference type="SMART" id="SM00532">
    <property type="entry name" value="LIGANc"/>
    <property type="match status" value="1"/>
</dbReference>
<dbReference type="SUPFAM" id="SSF52113">
    <property type="entry name" value="BRCT domain"/>
    <property type="match status" value="1"/>
</dbReference>
<dbReference type="SUPFAM" id="SSF56091">
    <property type="entry name" value="DNA ligase/mRNA capping enzyme, catalytic domain"/>
    <property type="match status" value="1"/>
</dbReference>
<dbReference type="SUPFAM" id="SSF50249">
    <property type="entry name" value="Nucleic acid-binding proteins"/>
    <property type="match status" value="1"/>
</dbReference>
<dbReference type="SUPFAM" id="SSF47781">
    <property type="entry name" value="RuvA domain 2-like"/>
    <property type="match status" value="1"/>
</dbReference>
<dbReference type="PROSITE" id="PS50172">
    <property type="entry name" value="BRCT"/>
    <property type="match status" value="1"/>
</dbReference>
<dbReference type="PROSITE" id="PS01056">
    <property type="entry name" value="DNA_LIGASE_N2"/>
    <property type="match status" value="1"/>
</dbReference>
<keyword id="KW-0227">DNA damage</keyword>
<keyword id="KW-0234">DNA repair</keyword>
<keyword id="KW-0235">DNA replication</keyword>
<keyword id="KW-0436">Ligase</keyword>
<keyword id="KW-0460">Magnesium</keyword>
<keyword id="KW-0464">Manganese</keyword>
<keyword id="KW-0479">Metal-binding</keyword>
<keyword id="KW-0520">NAD</keyword>
<keyword id="KW-1185">Reference proteome</keyword>
<keyword id="KW-0862">Zinc</keyword>
<gene>
    <name evidence="1" type="primary">ligA</name>
    <name type="ordered locus">Rru_A0939</name>
</gene>
<proteinExistence type="inferred from homology"/>
<reference key="1">
    <citation type="journal article" date="2011" name="Stand. Genomic Sci.">
        <title>Complete genome sequence of Rhodospirillum rubrum type strain (S1).</title>
        <authorList>
            <person name="Munk A.C."/>
            <person name="Copeland A."/>
            <person name="Lucas S."/>
            <person name="Lapidus A."/>
            <person name="Del Rio T.G."/>
            <person name="Barry K."/>
            <person name="Detter J.C."/>
            <person name="Hammon N."/>
            <person name="Israni S."/>
            <person name="Pitluck S."/>
            <person name="Brettin T."/>
            <person name="Bruce D."/>
            <person name="Han C."/>
            <person name="Tapia R."/>
            <person name="Gilna P."/>
            <person name="Schmutz J."/>
            <person name="Larimer F."/>
            <person name="Land M."/>
            <person name="Kyrpides N.C."/>
            <person name="Mavromatis K."/>
            <person name="Richardson P."/>
            <person name="Rohde M."/>
            <person name="Goeker M."/>
            <person name="Klenk H.P."/>
            <person name="Zhang Y."/>
            <person name="Roberts G.P."/>
            <person name="Reslewic S."/>
            <person name="Schwartz D.C."/>
        </authorList>
    </citation>
    <scope>NUCLEOTIDE SEQUENCE [LARGE SCALE GENOMIC DNA]</scope>
    <source>
        <strain>ATCC 11170 / ATH 1.1.1 / DSM 467 / LMG 4362 / NCIMB 8255 / S1</strain>
    </source>
</reference>
<organism>
    <name type="scientific">Rhodospirillum rubrum (strain ATCC 11170 / ATH 1.1.1 / DSM 467 / LMG 4362 / NCIMB 8255 / S1)</name>
    <dbReference type="NCBI Taxonomy" id="269796"/>
    <lineage>
        <taxon>Bacteria</taxon>
        <taxon>Pseudomonadati</taxon>
        <taxon>Pseudomonadota</taxon>
        <taxon>Alphaproteobacteria</taxon>
        <taxon>Rhodospirillales</taxon>
        <taxon>Rhodospirillaceae</taxon>
        <taxon>Rhodospirillum</taxon>
    </lineage>
</organism>